<comment type="function">
    <text evidence="1">Catalyzes the reductive methylation of 2'-deoxyuridine-5'-monophosphate (dUMP) to 2'-deoxythymidine-5'-monophosphate (dTMP) while utilizing 5,10-methylenetetrahydrofolate (mTHF) as the methyl donor and reductant in the reaction, yielding dihydrofolate (DHF) as a by-product. This enzymatic reaction provides an intracellular de novo source of dTMP, an essential precursor for DNA biosynthesis.</text>
</comment>
<comment type="catalytic activity">
    <reaction evidence="1">
        <text>dUMP + (6R)-5,10-methylene-5,6,7,8-tetrahydrofolate = 7,8-dihydrofolate + dTMP</text>
        <dbReference type="Rhea" id="RHEA:12104"/>
        <dbReference type="ChEBI" id="CHEBI:15636"/>
        <dbReference type="ChEBI" id="CHEBI:57451"/>
        <dbReference type="ChEBI" id="CHEBI:63528"/>
        <dbReference type="ChEBI" id="CHEBI:246422"/>
        <dbReference type="EC" id="2.1.1.45"/>
    </reaction>
</comment>
<comment type="pathway">
    <text evidence="1">Pyrimidine metabolism; dTTP biosynthesis.</text>
</comment>
<comment type="subunit">
    <text evidence="1">Homodimer.</text>
</comment>
<comment type="subcellular location">
    <subcellularLocation>
        <location evidence="1">Cytoplasm</location>
    </subcellularLocation>
</comment>
<comment type="similarity">
    <text evidence="1">Belongs to the thymidylate synthase family. Bacterial-type ThyA subfamily.</text>
</comment>
<gene>
    <name evidence="1" type="primary">thyA</name>
    <name type="ordered locus">SSON_2984</name>
</gene>
<dbReference type="EC" id="2.1.1.45" evidence="1"/>
<dbReference type="EMBL" id="CP000038">
    <property type="protein sequence ID" value="AAZ89579.1"/>
    <property type="molecule type" value="Genomic_DNA"/>
</dbReference>
<dbReference type="RefSeq" id="WP_000816232.1">
    <property type="nucleotide sequence ID" value="NC_007384.1"/>
</dbReference>
<dbReference type="SMR" id="Q3YY33"/>
<dbReference type="GeneID" id="93779171"/>
<dbReference type="KEGG" id="ssn:SSON_2984"/>
<dbReference type="HOGENOM" id="CLU_021669_0_0_6"/>
<dbReference type="UniPathway" id="UPA00575"/>
<dbReference type="Proteomes" id="UP000002529">
    <property type="component" value="Chromosome"/>
</dbReference>
<dbReference type="GO" id="GO:0005829">
    <property type="term" value="C:cytosol"/>
    <property type="evidence" value="ECO:0007669"/>
    <property type="project" value="TreeGrafter"/>
</dbReference>
<dbReference type="GO" id="GO:0004799">
    <property type="term" value="F:thymidylate synthase activity"/>
    <property type="evidence" value="ECO:0007669"/>
    <property type="project" value="UniProtKB-UniRule"/>
</dbReference>
<dbReference type="GO" id="GO:0006231">
    <property type="term" value="P:dTMP biosynthetic process"/>
    <property type="evidence" value="ECO:0007669"/>
    <property type="project" value="UniProtKB-UniRule"/>
</dbReference>
<dbReference type="GO" id="GO:0006235">
    <property type="term" value="P:dTTP biosynthetic process"/>
    <property type="evidence" value="ECO:0007669"/>
    <property type="project" value="UniProtKB-UniRule"/>
</dbReference>
<dbReference type="GO" id="GO:0032259">
    <property type="term" value="P:methylation"/>
    <property type="evidence" value="ECO:0007669"/>
    <property type="project" value="UniProtKB-KW"/>
</dbReference>
<dbReference type="CDD" id="cd00351">
    <property type="entry name" value="TS_Pyrimidine_HMase"/>
    <property type="match status" value="1"/>
</dbReference>
<dbReference type="FunFam" id="3.30.572.10:FF:000001">
    <property type="entry name" value="Thymidylate synthase"/>
    <property type="match status" value="1"/>
</dbReference>
<dbReference type="Gene3D" id="3.30.572.10">
    <property type="entry name" value="Thymidylate synthase/dCMP hydroxymethylase domain"/>
    <property type="match status" value="1"/>
</dbReference>
<dbReference type="HAMAP" id="MF_00008">
    <property type="entry name" value="Thymidy_synth_bact"/>
    <property type="match status" value="1"/>
</dbReference>
<dbReference type="InterPro" id="IPR045097">
    <property type="entry name" value="Thymidate_synth/dCMP_Mease"/>
</dbReference>
<dbReference type="InterPro" id="IPR023451">
    <property type="entry name" value="Thymidate_synth/dCMP_Mease_dom"/>
</dbReference>
<dbReference type="InterPro" id="IPR036926">
    <property type="entry name" value="Thymidate_synth/dCMP_Mease_sf"/>
</dbReference>
<dbReference type="InterPro" id="IPR000398">
    <property type="entry name" value="Thymidylate_synthase"/>
</dbReference>
<dbReference type="InterPro" id="IPR020940">
    <property type="entry name" value="Thymidylate_synthase_AS"/>
</dbReference>
<dbReference type="NCBIfam" id="NF002497">
    <property type="entry name" value="PRK01827.1-3"/>
    <property type="match status" value="1"/>
</dbReference>
<dbReference type="NCBIfam" id="NF002499">
    <property type="entry name" value="PRK01827.1-5"/>
    <property type="match status" value="1"/>
</dbReference>
<dbReference type="NCBIfam" id="TIGR03284">
    <property type="entry name" value="thym_sym"/>
    <property type="match status" value="2"/>
</dbReference>
<dbReference type="PANTHER" id="PTHR11548:SF9">
    <property type="entry name" value="THYMIDYLATE SYNTHASE"/>
    <property type="match status" value="1"/>
</dbReference>
<dbReference type="PANTHER" id="PTHR11548">
    <property type="entry name" value="THYMIDYLATE SYNTHASE 1"/>
    <property type="match status" value="1"/>
</dbReference>
<dbReference type="Pfam" id="PF00303">
    <property type="entry name" value="Thymidylat_synt"/>
    <property type="match status" value="1"/>
</dbReference>
<dbReference type="PRINTS" id="PR00108">
    <property type="entry name" value="THYMDSNTHASE"/>
</dbReference>
<dbReference type="SUPFAM" id="SSF55831">
    <property type="entry name" value="Thymidylate synthase/dCMP hydroxymethylase"/>
    <property type="match status" value="1"/>
</dbReference>
<dbReference type="PROSITE" id="PS00091">
    <property type="entry name" value="THYMIDYLATE_SYNTHASE"/>
    <property type="match status" value="1"/>
</dbReference>
<protein>
    <recommendedName>
        <fullName evidence="1">Thymidylate synthase</fullName>
        <shortName evidence="1">TS</shortName>
        <shortName evidence="1">TSase</shortName>
        <ecNumber evidence="1">2.1.1.45</ecNumber>
    </recommendedName>
</protein>
<organism>
    <name type="scientific">Shigella sonnei (strain Ss046)</name>
    <dbReference type="NCBI Taxonomy" id="300269"/>
    <lineage>
        <taxon>Bacteria</taxon>
        <taxon>Pseudomonadati</taxon>
        <taxon>Pseudomonadota</taxon>
        <taxon>Gammaproteobacteria</taxon>
        <taxon>Enterobacterales</taxon>
        <taxon>Enterobacteriaceae</taxon>
        <taxon>Shigella</taxon>
    </lineage>
</organism>
<evidence type="ECO:0000255" key="1">
    <source>
        <dbReference type="HAMAP-Rule" id="MF_00008"/>
    </source>
</evidence>
<sequence>MKQYLELMQKVLDEGTQKNDRTGTGTLSIFGHQMRFNLQDGFPLVTTKRCHLRSIIHELLWFLQGDTNIAYLHENNVTIWDEWADENGDLGPVYGKQWRAWPTPDGRHIDQITTVLNQLKNDPDSRRIIVSAWNVGELDKMALAPCHAFFQFYVADGKLSCQLYQRSCDVFLGLPFNIASYALLVHMMAQQCDLEVGDFVWTGGDTHLYSNHMDQTHLQLSREPRPLPKLIIKRKPESIFDYRFEDFEIEGYDPHPGIKAPVAI</sequence>
<reference key="1">
    <citation type="journal article" date="2005" name="Nucleic Acids Res.">
        <title>Genome dynamics and diversity of Shigella species, the etiologic agents of bacillary dysentery.</title>
        <authorList>
            <person name="Yang F."/>
            <person name="Yang J."/>
            <person name="Zhang X."/>
            <person name="Chen L."/>
            <person name="Jiang Y."/>
            <person name="Yan Y."/>
            <person name="Tang X."/>
            <person name="Wang J."/>
            <person name="Xiong Z."/>
            <person name="Dong J."/>
            <person name="Xue Y."/>
            <person name="Zhu Y."/>
            <person name="Xu X."/>
            <person name="Sun L."/>
            <person name="Chen S."/>
            <person name="Nie H."/>
            <person name="Peng J."/>
            <person name="Xu J."/>
            <person name="Wang Y."/>
            <person name="Yuan Z."/>
            <person name="Wen Y."/>
            <person name="Yao Z."/>
            <person name="Shen Y."/>
            <person name="Qiang B."/>
            <person name="Hou Y."/>
            <person name="Yu J."/>
            <person name="Jin Q."/>
        </authorList>
    </citation>
    <scope>NUCLEOTIDE SEQUENCE [LARGE SCALE GENOMIC DNA]</scope>
    <source>
        <strain>Ss046</strain>
    </source>
</reference>
<feature type="chain" id="PRO_1000000681" description="Thymidylate synthase">
    <location>
        <begin position="1"/>
        <end position="264"/>
    </location>
</feature>
<feature type="active site" description="Nucleophile" evidence="1">
    <location>
        <position position="146"/>
    </location>
</feature>
<feature type="binding site" description="in other chain" evidence="1">
    <location>
        <position position="21"/>
    </location>
    <ligand>
        <name>dUMP</name>
        <dbReference type="ChEBI" id="CHEBI:246422"/>
        <note>ligand shared between dimeric partners</note>
    </ligand>
</feature>
<feature type="binding site" evidence="1">
    <location>
        <position position="51"/>
    </location>
    <ligand>
        <name>(6R)-5,10-methylene-5,6,7,8-tetrahydrofolate</name>
        <dbReference type="ChEBI" id="CHEBI:15636"/>
    </ligand>
</feature>
<feature type="binding site" evidence="1">
    <location>
        <begin position="126"/>
        <end position="127"/>
    </location>
    <ligand>
        <name>dUMP</name>
        <dbReference type="ChEBI" id="CHEBI:246422"/>
        <note>ligand shared between dimeric partners</note>
    </ligand>
</feature>
<feature type="binding site" description="in other chain" evidence="1">
    <location>
        <begin position="166"/>
        <end position="169"/>
    </location>
    <ligand>
        <name>dUMP</name>
        <dbReference type="ChEBI" id="CHEBI:246422"/>
        <note>ligand shared between dimeric partners</note>
    </ligand>
</feature>
<feature type="binding site" evidence="1">
    <location>
        <position position="169"/>
    </location>
    <ligand>
        <name>(6R)-5,10-methylene-5,6,7,8-tetrahydrofolate</name>
        <dbReference type="ChEBI" id="CHEBI:15636"/>
    </ligand>
</feature>
<feature type="binding site" description="in other chain" evidence="1">
    <location>
        <position position="177"/>
    </location>
    <ligand>
        <name>dUMP</name>
        <dbReference type="ChEBI" id="CHEBI:246422"/>
        <note>ligand shared between dimeric partners</note>
    </ligand>
</feature>
<feature type="binding site" description="in other chain" evidence="1">
    <location>
        <begin position="207"/>
        <end position="209"/>
    </location>
    <ligand>
        <name>dUMP</name>
        <dbReference type="ChEBI" id="CHEBI:246422"/>
        <note>ligand shared between dimeric partners</note>
    </ligand>
</feature>
<feature type="binding site" evidence="1">
    <location>
        <position position="263"/>
    </location>
    <ligand>
        <name>(6R)-5,10-methylene-5,6,7,8-tetrahydrofolate</name>
        <dbReference type="ChEBI" id="CHEBI:15636"/>
    </ligand>
</feature>
<name>TYSY_SHISS</name>
<keyword id="KW-0963">Cytoplasm</keyword>
<keyword id="KW-0489">Methyltransferase</keyword>
<keyword id="KW-0545">Nucleotide biosynthesis</keyword>
<keyword id="KW-1185">Reference proteome</keyword>
<keyword id="KW-0808">Transferase</keyword>
<accession>Q3YY33</accession>
<proteinExistence type="inferred from homology"/>